<protein>
    <recommendedName>
        <fullName evidence="5">Small ribosomal subunit protein eS26</fullName>
    </recommendedName>
    <alternativeName>
        <fullName>40S ribosomal protein S26</fullName>
    </alternativeName>
</protein>
<evidence type="ECO:0000250" key="1">
    <source>
        <dbReference type="UniProtKB" id="P13008"/>
    </source>
</evidence>
<evidence type="ECO:0000250" key="2">
    <source>
        <dbReference type="UniProtKB" id="P49171"/>
    </source>
</evidence>
<evidence type="ECO:0000250" key="3">
    <source>
        <dbReference type="UniProtKB" id="P62854"/>
    </source>
</evidence>
<evidence type="ECO:0000256" key="4">
    <source>
        <dbReference type="SAM" id="MobiDB-lite"/>
    </source>
</evidence>
<evidence type="ECO:0000305" key="5"/>
<comment type="subunit">
    <text evidence="1">Component of the 40S small ribosomal subunit.</text>
</comment>
<comment type="subcellular location">
    <subcellularLocation>
        <location evidence="3">Cytoplasm</location>
        <location evidence="3">Cytosol</location>
    </subcellularLocation>
    <subcellularLocation>
        <location evidence="3">Cytoplasm</location>
    </subcellularLocation>
    <subcellularLocation>
        <location evidence="2">Rough endoplasmic reticulum</location>
    </subcellularLocation>
    <text evidence="2 3">Detected on cytosolic polysomes (By similarity). Detected in ribosomes that are associated with the rough endoplasmic reticulum (By similarity).</text>
</comment>
<comment type="similarity">
    <text evidence="5">Belongs to the eukaryotic ribosomal protein eS26 family.</text>
</comment>
<gene>
    <name type="primary">RpS26</name>
    <name type="ORF">AGAP012100</name>
</gene>
<organism>
    <name type="scientific">Anopheles gambiae</name>
    <name type="common">African malaria mosquito</name>
    <dbReference type="NCBI Taxonomy" id="7165"/>
    <lineage>
        <taxon>Eukaryota</taxon>
        <taxon>Metazoa</taxon>
        <taxon>Ecdysozoa</taxon>
        <taxon>Arthropoda</taxon>
        <taxon>Hexapoda</taxon>
        <taxon>Insecta</taxon>
        <taxon>Pterygota</taxon>
        <taxon>Neoptera</taxon>
        <taxon>Endopterygota</taxon>
        <taxon>Diptera</taxon>
        <taxon>Nematocera</taxon>
        <taxon>Culicoidea</taxon>
        <taxon>Culicidae</taxon>
        <taxon>Anophelinae</taxon>
        <taxon>Anopheles</taxon>
    </lineage>
</organism>
<feature type="chain" id="PRO_0000204519" description="Small ribosomal subunit protein eS26">
    <location>
        <begin position="1"/>
        <end position="115"/>
    </location>
</feature>
<feature type="region of interest" description="Disordered" evidence="4">
    <location>
        <begin position="86"/>
        <end position="115"/>
    </location>
</feature>
<feature type="sequence conflict" description="In Ref. 1; AAG15374." evidence="5" ref="1">
    <original>TKK</original>
    <variation>LE</variation>
    <location>
        <begin position="2"/>
        <end position="4"/>
    </location>
</feature>
<reference key="1">
    <citation type="journal article" date="2000" name="Proc. Natl. Acad. Sci. U.S.A.">
        <title>Genes identified by an expression screen of the vector mosquito Anopheles gambiae display differential molecular immune response to malaria parasites and bacteria.</title>
        <authorList>
            <person name="Oduol F."/>
            <person name="Xu J."/>
            <person name="Niare O."/>
            <person name="Natarajan R."/>
            <person name="Vernick K.D."/>
        </authorList>
    </citation>
    <scope>NUCLEOTIDE SEQUENCE [MRNA]</scope>
    <source>
        <strain>G3</strain>
    </source>
</reference>
<reference key="2">
    <citation type="journal article" date="2002" name="Science">
        <title>The genome sequence of the malaria mosquito Anopheles gambiae.</title>
        <authorList>
            <person name="Holt R.A."/>
            <person name="Subramanian G.M."/>
            <person name="Halpern A."/>
            <person name="Sutton G.G."/>
            <person name="Charlab R."/>
            <person name="Nusskern D.R."/>
            <person name="Wincker P."/>
            <person name="Clark A.G."/>
            <person name="Ribeiro J.M.C."/>
            <person name="Wides R."/>
            <person name="Salzberg S.L."/>
            <person name="Loftus B.J."/>
            <person name="Yandell M.D."/>
            <person name="Majoros W.H."/>
            <person name="Rusch D.B."/>
            <person name="Lai Z."/>
            <person name="Kraft C.L."/>
            <person name="Abril J.F."/>
            <person name="Anthouard V."/>
            <person name="Arensburger P."/>
            <person name="Atkinson P.W."/>
            <person name="Baden H."/>
            <person name="de Berardinis V."/>
            <person name="Baldwin D."/>
            <person name="Benes V."/>
            <person name="Biedler J."/>
            <person name="Blass C."/>
            <person name="Bolanos R."/>
            <person name="Boscus D."/>
            <person name="Barnstead M."/>
            <person name="Cai S."/>
            <person name="Center A."/>
            <person name="Chaturverdi K."/>
            <person name="Christophides G.K."/>
            <person name="Chrystal M.A.M."/>
            <person name="Clamp M."/>
            <person name="Cravchik A."/>
            <person name="Curwen V."/>
            <person name="Dana A."/>
            <person name="Delcher A."/>
            <person name="Dew I."/>
            <person name="Evans C.A."/>
            <person name="Flanigan M."/>
            <person name="Grundschober-Freimoser A."/>
            <person name="Friedli L."/>
            <person name="Gu Z."/>
            <person name="Guan P."/>
            <person name="Guigo R."/>
            <person name="Hillenmeyer M.E."/>
            <person name="Hladun S.L."/>
            <person name="Hogan J.R."/>
            <person name="Hong Y.S."/>
            <person name="Hoover J."/>
            <person name="Jaillon O."/>
            <person name="Ke Z."/>
            <person name="Kodira C.D."/>
            <person name="Kokoza E."/>
            <person name="Koutsos A."/>
            <person name="Letunic I."/>
            <person name="Levitsky A.A."/>
            <person name="Liang Y."/>
            <person name="Lin J.-J."/>
            <person name="Lobo N.F."/>
            <person name="Lopez J.R."/>
            <person name="Malek J.A."/>
            <person name="McIntosh T.C."/>
            <person name="Meister S."/>
            <person name="Miller J.R."/>
            <person name="Mobarry C."/>
            <person name="Mongin E."/>
            <person name="Murphy S.D."/>
            <person name="O'Brochta D.A."/>
            <person name="Pfannkoch C."/>
            <person name="Qi R."/>
            <person name="Regier M.A."/>
            <person name="Remington K."/>
            <person name="Shao H."/>
            <person name="Sharakhova M.V."/>
            <person name="Sitter C.D."/>
            <person name="Shetty J."/>
            <person name="Smith T.J."/>
            <person name="Strong R."/>
            <person name="Sun J."/>
            <person name="Thomasova D."/>
            <person name="Ton L.Q."/>
            <person name="Topalis P."/>
            <person name="Tu Z.J."/>
            <person name="Unger M.F."/>
            <person name="Walenz B."/>
            <person name="Wang A.H."/>
            <person name="Wang J."/>
            <person name="Wang M."/>
            <person name="Wang X."/>
            <person name="Woodford K.J."/>
            <person name="Wortman J.R."/>
            <person name="Wu M."/>
            <person name="Yao A."/>
            <person name="Zdobnov E.M."/>
            <person name="Zhang H."/>
            <person name="Zhao Q."/>
            <person name="Zhao S."/>
            <person name="Zhu S.C."/>
            <person name="Zhimulev I."/>
            <person name="Coluzzi M."/>
            <person name="della Torre A."/>
            <person name="Roth C.W."/>
            <person name="Louis C."/>
            <person name="Kalush F."/>
            <person name="Mural R.J."/>
            <person name="Myers E.W."/>
            <person name="Adams M.D."/>
            <person name="Smith H.O."/>
            <person name="Broder S."/>
            <person name="Gardner M.J."/>
            <person name="Fraser C.M."/>
            <person name="Birney E."/>
            <person name="Bork P."/>
            <person name="Brey P.T."/>
            <person name="Venter J.C."/>
            <person name="Weissenbach J."/>
            <person name="Kafatos F.C."/>
            <person name="Collins F.H."/>
            <person name="Hoffman S.L."/>
        </authorList>
    </citation>
    <scope>NUCLEOTIDE SEQUENCE [LARGE SCALE GENOMIC DNA]</scope>
    <source>
        <strain>PEST</strain>
    </source>
</reference>
<sequence length="115" mass="13296">MTKKRRNGGRCKHNRGHVKAVRCTNCARCVPKDKAIKKFVIRNIVEAAAVRDISDASVYSSYVLPKLYAKLHYCVSCAIHSKVVRNRSKETRRIRTPPQRSFPKDMNRQQNAQRK</sequence>
<proteinExistence type="inferred from homology"/>
<name>RS26_ANOGA</name>
<keyword id="KW-0963">Cytoplasm</keyword>
<keyword id="KW-0256">Endoplasmic reticulum</keyword>
<keyword id="KW-1185">Reference proteome</keyword>
<keyword id="KW-0687">Ribonucleoprotein</keyword>
<keyword id="KW-0689">Ribosomal protein</keyword>
<dbReference type="EMBL" id="AF283269">
    <property type="protein sequence ID" value="AAG15374.1"/>
    <property type="molecule type" value="mRNA"/>
</dbReference>
<dbReference type="EMBL" id="AAAB01008986">
    <property type="protein sequence ID" value="EAA00291.4"/>
    <property type="molecule type" value="Genomic_DNA"/>
</dbReference>
<dbReference type="SMR" id="Q9GT45"/>
<dbReference type="FunCoup" id="Q9GT45">
    <property type="interactions" value="1158"/>
</dbReference>
<dbReference type="STRING" id="7165.Q9GT45"/>
<dbReference type="PaxDb" id="7165-AGAP012100-PA"/>
<dbReference type="EnsemblMetazoa" id="AGAP012100-RA">
    <property type="protein sequence ID" value="AGAP012100-PA"/>
    <property type="gene ID" value="AGAP012100"/>
</dbReference>
<dbReference type="GeneID" id="1280575"/>
<dbReference type="KEGG" id="aga:1280575"/>
<dbReference type="CTD" id="6231"/>
<dbReference type="VEuPathDB" id="VectorBase:AGAMI1_010972"/>
<dbReference type="VEuPathDB" id="VectorBase:AGAP012100"/>
<dbReference type="eggNOG" id="KOG1768">
    <property type="taxonomic scope" value="Eukaryota"/>
</dbReference>
<dbReference type="HOGENOM" id="CLU_129451_0_1_1"/>
<dbReference type="InParanoid" id="Q9GT45"/>
<dbReference type="OMA" id="KCYCVSC"/>
<dbReference type="PhylomeDB" id="Q9GT45"/>
<dbReference type="Proteomes" id="UP000007062">
    <property type="component" value="Chromosome 3L"/>
</dbReference>
<dbReference type="GO" id="GO:0098556">
    <property type="term" value="C:cytoplasmic side of rough endoplasmic reticulum membrane"/>
    <property type="evidence" value="ECO:0000250"/>
    <property type="project" value="UniProtKB"/>
</dbReference>
<dbReference type="GO" id="GO:0022627">
    <property type="term" value="C:cytosolic small ribosomal subunit"/>
    <property type="evidence" value="ECO:0000250"/>
    <property type="project" value="UniProtKB"/>
</dbReference>
<dbReference type="GO" id="GO:0005840">
    <property type="term" value="C:ribosome"/>
    <property type="evidence" value="ECO:0000250"/>
    <property type="project" value="UniProtKB"/>
</dbReference>
<dbReference type="GO" id="GO:0003729">
    <property type="term" value="F:mRNA binding"/>
    <property type="evidence" value="ECO:0000318"/>
    <property type="project" value="GO_Central"/>
</dbReference>
<dbReference type="GO" id="GO:0003735">
    <property type="term" value="F:structural constituent of ribosome"/>
    <property type="evidence" value="ECO:0000318"/>
    <property type="project" value="GO_Central"/>
</dbReference>
<dbReference type="GO" id="GO:0002181">
    <property type="term" value="P:cytoplasmic translation"/>
    <property type="evidence" value="ECO:0000250"/>
    <property type="project" value="UniProtKB"/>
</dbReference>
<dbReference type="FunFam" id="3.30.1740.20:FF:000001">
    <property type="entry name" value="40S ribosomal protein S26"/>
    <property type="match status" value="1"/>
</dbReference>
<dbReference type="Gene3D" id="3.30.1740.20">
    <property type="entry name" value="Ribosomal protein S26e"/>
    <property type="match status" value="1"/>
</dbReference>
<dbReference type="InterPro" id="IPR000892">
    <property type="entry name" value="Ribosomal_eS26"/>
</dbReference>
<dbReference type="InterPro" id="IPR047864">
    <property type="entry name" value="Ribosomal_eS26_CS"/>
</dbReference>
<dbReference type="InterPro" id="IPR038551">
    <property type="entry name" value="Ribosomal_eS26_sf"/>
</dbReference>
<dbReference type="PANTHER" id="PTHR12538">
    <property type="entry name" value="40S RIBOSOMAL PROTEIN S26"/>
    <property type="match status" value="1"/>
</dbReference>
<dbReference type="PANTHER" id="PTHR12538:SF0">
    <property type="entry name" value="40S RIBOSOMAL PROTEIN S26"/>
    <property type="match status" value="1"/>
</dbReference>
<dbReference type="Pfam" id="PF01283">
    <property type="entry name" value="Ribosomal_S26e"/>
    <property type="match status" value="1"/>
</dbReference>
<dbReference type="PROSITE" id="PS00733">
    <property type="entry name" value="RIBOSOMAL_S26E"/>
    <property type="match status" value="1"/>
</dbReference>
<accession>Q9GT45</accession>
<accession>Q7PTS2</accession>
<accession>Q7PV83</accession>